<sequence>MSEEAKVQRAVIGRVVSDKMDKTRTILIERKVRHPLYGKYIRRSTKLHVHDEGNEARMGDKVMVQECRPMSKTKTFRLVKVLEKAAG</sequence>
<name>RS17_THISH</name>
<dbReference type="EMBL" id="CP001339">
    <property type="protein sequence ID" value="ACL73395.1"/>
    <property type="molecule type" value="Genomic_DNA"/>
</dbReference>
<dbReference type="RefSeq" id="WP_012638871.1">
    <property type="nucleotide sequence ID" value="NC_011901.1"/>
</dbReference>
<dbReference type="SMR" id="B8GV49"/>
<dbReference type="STRING" id="396588.Tgr7_2315"/>
<dbReference type="KEGG" id="tgr:Tgr7_2315"/>
<dbReference type="eggNOG" id="COG0186">
    <property type="taxonomic scope" value="Bacteria"/>
</dbReference>
<dbReference type="HOGENOM" id="CLU_073626_1_1_6"/>
<dbReference type="OrthoDB" id="9811714at2"/>
<dbReference type="Proteomes" id="UP000002383">
    <property type="component" value="Chromosome"/>
</dbReference>
<dbReference type="GO" id="GO:0022627">
    <property type="term" value="C:cytosolic small ribosomal subunit"/>
    <property type="evidence" value="ECO:0007669"/>
    <property type="project" value="TreeGrafter"/>
</dbReference>
<dbReference type="GO" id="GO:0019843">
    <property type="term" value="F:rRNA binding"/>
    <property type="evidence" value="ECO:0007669"/>
    <property type="project" value="UniProtKB-UniRule"/>
</dbReference>
<dbReference type="GO" id="GO:0003735">
    <property type="term" value="F:structural constituent of ribosome"/>
    <property type="evidence" value="ECO:0007669"/>
    <property type="project" value="InterPro"/>
</dbReference>
<dbReference type="GO" id="GO:0006412">
    <property type="term" value="P:translation"/>
    <property type="evidence" value="ECO:0007669"/>
    <property type="project" value="UniProtKB-UniRule"/>
</dbReference>
<dbReference type="CDD" id="cd00364">
    <property type="entry name" value="Ribosomal_uS17"/>
    <property type="match status" value="1"/>
</dbReference>
<dbReference type="Gene3D" id="2.40.50.140">
    <property type="entry name" value="Nucleic acid-binding proteins"/>
    <property type="match status" value="1"/>
</dbReference>
<dbReference type="HAMAP" id="MF_01345_B">
    <property type="entry name" value="Ribosomal_uS17_B"/>
    <property type="match status" value="1"/>
</dbReference>
<dbReference type="InterPro" id="IPR012340">
    <property type="entry name" value="NA-bd_OB-fold"/>
</dbReference>
<dbReference type="InterPro" id="IPR000266">
    <property type="entry name" value="Ribosomal_uS17"/>
</dbReference>
<dbReference type="InterPro" id="IPR019984">
    <property type="entry name" value="Ribosomal_uS17_bact/chlr"/>
</dbReference>
<dbReference type="NCBIfam" id="NF004123">
    <property type="entry name" value="PRK05610.1"/>
    <property type="match status" value="1"/>
</dbReference>
<dbReference type="NCBIfam" id="TIGR03635">
    <property type="entry name" value="uS17_bact"/>
    <property type="match status" value="1"/>
</dbReference>
<dbReference type="PANTHER" id="PTHR10744">
    <property type="entry name" value="40S RIBOSOMAL PROTEIN S11 FAMILY MEMBER"/>
    <property type="match status" value="1"/>
</dbReference>
<dbReference type="PANTHER" id="PTHR10744:SF1">
    <property type="entry name" value="SMALL RIBOSOMAL SUBUNIT PROTEIN US17M"/>
    <property type="match status" value="1"/>
</dbReference>
<dbReference type="Pfam" id="PF00366">
    <property type="entry name" value="Ribosomal_S17"/>
    <property type="match status" value="1"/>
</dbReference>
<dbReference type="PRINTS" id="PR00973">
    <property type="entry name" value="RIBOSOMALS17"/>
</dbReference>
<dbReference type="SUPFAM" id="SSF50249">
    <property type="entry name" value="Nucleic acid-binding proteins"/>
    <property type="match status" value="1"/>
</dbReference>
<evidence type="ECO:0000255" key="1">
    <source>
        <dbReference type="HAMAP-Rule" id="MF_01345"/>
    </source>
</evidence>
<evidence type="ECO:0000305" key="2"/>
<accession>B8GV49</accession>
<gene>
    <name evidence="1" type="primary">rpsQ</name>
    <name type="ordered locus">Tgr7_2315</name>
</gene>
<feature type="chain" id="PRO_1000166505" description="Small ribosomal subunit protein uS17">
    <location>
        <begin position="1"/>
        <end position="87"/>
    </location>
</feature>
<comment type="function">
    <text evidence="1">One of the primary rRNA binding proteins, it binds specifically to the 5'-end of 16S ribosomal RNA.</text>
</comment>
<comment type="subunit">
    <text evidence="1">Part of the 30S ribosomal subunit.</text>
</comment>
<comment type="similarity">
    <text evidence="1">Belongs to the universal ribosomal protein uS17 family.</text>
</comment>
<reference key="1">
    <citation type="journal article" date="2011" name="Stand. Genomic Sci.">
        <title>Complete genome sequence of 'Thioalkalivibrio sulfidophilus' HL-EbGr7.</title>
        <authorList>
            <person name="Muyzer G."/>
            <person name="Sorokin D.Y."/>
            <person name="Mavromatis K."/>
            <person name="Lapidus A."/>
            <person name="Clum A."/>
            <person name="Ivanova N."/>
            <person name="Pati A."/>
            <person name="d'Haeseleer P."/>
            <person name="Woyke T."/>
            <person name="Kyrpides N.C."/>
        </authorList>
    </citation>
    <scope>NUCLEOTIDE SEQUENCE [LARGE SCALE GENOMIC DNA]</scope>
    <source>
        <strain>HL-EbGR7</strain>
    </source>
</reference>
<protein>
    <recommendedName>
        <fullName evidence="1">Small ribosomal subunit protein uS17</fullName>
    </recommendedName>
    <alternativeName>
        <fullName evidence="2">30S ribosomal protein S17</fullName>
    </alternativeName>
</protein>
<organism>
    <name type="scientific">Thioalkalivibrio sulfidiphilus (strain HL-EbGR7)</name>
    <dbReference type="NCBI Taxonomy" id="396588"/>
    <lineage>
        <taxon>Bacteria</taxon>
        <taxon>Pseudomonadati</taxon>
        <taxon>Pseudomonadota</taxon>
        <taxon>Gammaproteobacteria</taxon>
        <taxon>Chromatiales</taxon>
        <taxon>Ectothiorhodospiraceae</taxon>
        <taxon>Thioalkalivibrio</taxon>
    </lineage>
</organism>
<proteinExistence type="inferred from homology"/>
<keyword id="KW-1185">Reference proteome</keyword>
<keyword id="KW-0687">Ribonucleoprotein</keyword>
<keyword id="KW-0689">Ribosomal protein</keyword>
<keyword id="KW-0694">RNA-binding</keyword>
<keyword id="KW-0699">rRNA-binding</keyword>